<reference key="1">
    <citation type="journal article" date="2008" name="BMC Genomics">
        <title>The missing link: Bordetella petrii is endowed with both the metabolic versatility of environmental bacteria and virulence traits of pathogenic Bordetellae.</title>
        <authorList>
            <person name="Gross R."/>
            <person name="Guzman C.A."/>
            <person name="Sebaihia M."/>
            <person name="Martin dos Santos V.A.P."/>
            <person name="Pieper D.H."/>
            <person name="Koebnik R."/>
            <person name="Lechner M."/>
            <person name="Bartels D."/>
            <person name="Buhrmester J."/>
            <person name="Choudhuri J.V."/>
            <person name="Ebensen T."/>
            <person name="Gaigalat L."/>
            <person name="Herrmann S."/>
            <person name="Khachane A.N."/>
            <person name="Larisch C."/>
            <person name="Link S."/>
            <person name="Linke B."/>
            <person name="Meyer F."/>
            <person name="Mormann S."/>
            <person name="Nakunst D."/>
            <person name="Rueckert C."/>
            <person name="Schneiker-Bekel S."/>
            <person name="Schulze K."/>
            <person name="Voerholter F.-J."/>
            <person name="Yevsa T."/>
            <person name="Engle J.T."/>
            <person name="Goldman W.E."/>
            <person name="Puehler A."/>
            <person name="Goebel U.B."/>
            <person name="Goesmann A."/>
            <person name="Bloecker H."/>
            <person name="Kaiser O."/>
            <person name="Martinez-Arias R."/>
        </authorList>
    </citation>
    <scope>NUCLEOTIDE SEQUENCE [LARGE SCALE GENOMIC DNA]</scope>
    <source>
        <strain>ATCC BAA-461 / DSM 12804 / CCUG 43448</strain>
    </source>
</reference>
<proteinExistence type="inferred from homology"/>
<keyword id="KW-0408">Iron</keyword>
<keyword id="KW-0411">Iron-sulfur</keyword>
<keyword id="KW-0479">Metal-binding</keyword>
<dbReference type="EMBL" id="AM902716">
    <property type="protein sequence ID" value="CAP40929.1"/>
    <property type="molecule type" value="Genomic_DNA"/>
</dbReference>
<dbReference type="SMR" id="A9I246"/>
<dbReference type="STRING" id="94624.Bpet0597"/>
<dbReference type="KEGG" id="bpt:Bpet0597"/>
<dbReference type="eggNOG" id="COG0316">
    <property type="taxonomic scope" value="Bacteria"/>
</dbReference>
<dbReference type="Proteomes" id="UP000001225">
    <property type="component" value="Chromosome"/>
</dbReference>
<dbReference type="GO" id="GO:0051537">
    <property type="term" value="F:2 iron, 2 sulfur cluster binding"/>
    <property type="evidence" value="ECO:0007669"/>
    <property type="project" value="TreeGrafter"/>
</dbReference>
<dbReference type="GO" id="GO:0051539">
    <property type="term" value="F:4 iron, 4 sulfur cluster binding"/>
    <property type="evidence" value="ECO:0007669"/>
    <property type="project" value="TreeGrafter"/>
</dbReference>
<dbReference type="GO" id="GO:0005506">
    <property type="term" value="F:iron ion binding"/>
    <property type="evidence" value="ECO:0007669"/>
    <property type="project" value="UniProtKB-UniRule"/>
</dbReference>
<dbReference type="GO" id="GO:0016226">
    <property type="term" value="P:iron-sulfur cluster assembly"/>
    <property type="evidence" value="ECO:0007669"/>
    <property type="project" value="UniProtKB-UniRule"/>
</dbReference>
<dbReference type="FunFam" id="2.60.300.12:FF:000002">
    <property type="entry name" value="Iron-sulfur cluster insertion protein ErpA"/>
    <property type="match status" value="1"/>
</dbReference>
<dbReference type="Gene3D" id="2.60.300.12">
    <property type="entry name" value="HesB-like domain"/>
    <property type="match status" value="1"/>
</dbReference>
<dbReference type="HAMAP" id="MF_01380">
    <property type="entry name" value="Fe_S_insert_ErpA"/>
    <property type="match status" value="1"/>
</dbReference>
<dbReference type="InterPro" id="IPR000361">
    <property type="entry name" value="FeS_biogenesis"/>
</dbReference>
<dbReference type="InterPro" id="IPR016092">
    <property type="entry name" value="FeS_cluster_insertion"/>
</dbReference>
<dbReference type="InterPro" id="IPR017870">
    <property type="entry name" value="FeS_cluster_insertion_CS"/>
</dbReference>
<dbReference type="InterPro" id="IPR023063">
    <property type="entry name" value="FeS_cluster_insertion_RrpA"/>
</dbReference>
<dbReference type="InterPro" id="IPR035903">
    <property type="entry name" value="HesB-like_dom_sf"/>
</dbReference>
<dbReference type="NCBIfam" id="TIGR00049">
    <property type="entry name" value="iron-sulfur cluster assembly accessory protein"/>
    <property type="match status" value="1"/>
</dbReference>
<dbReference type="NCBIfam" id="NF010147">
    <property type="entry name" value="PRK13623.1"/>
    <property type="match status" value="1"/>
</dbReference>
<dbReference type="PANTHER" id="PTHR43011">
    <property type="entry name" value="IRON-SULFUR CLUSTER ASSEMBLY 2 HOMOLOG, MITOCHONDRIAL"/>
    <property type="match status" value="1"/>
</dbReference>
<dbReference type="PANTHER" id="PTHR43011:SF1">
    <property type="entry name" value="IRON-SULFUR CLUSTER ASSEMBLY 2 HOMOLOG, MITOCHONDRIAL"/>
    <property type="match status" value="1"/>
</dbReference>
<dbReference type="Pfam" id="PF01521">
    <property type="entry name" value="Fe-S_biosyn"/>
    <property type="match status" value="1"/>
</dbReference>
<dbReference type="SUPFAM" id="SSF89360">
    <property type="entry name" value="HesB-like domain"/>
    <property type="match status" value="1"/>
</dbReference>
<dbReference type="PROSITE" id="PS01152">
    <property type="entry name" value="HESB"/>
    <property type="match status" value="1"/>
</dbReference>
<feature type="chain" id="PRO_1000144896" description="Putative iron-sulfur cluster insertion protein ErpA">
    <location>
        <begin position="1"/>
        <end position="122"/>
    </location>
</feature>
<feature type="binding site" evidence="1">
    <location>
        <position position="50"/>
    </location>
    <ligand>
        <name>iron-sulfur cluster</name>
        <dbReference type="ChEBI" id="CHEBI:30408"/>
    </ligand>
</feature>
<feature type="binding site" evidence="1">
    <location>
        <position position="114"/>
    </location>
    <ligand>
        <name>iron-sulfur cluster</name>
        <dbReference type="ChEBI" id="CHEBI:30408"/>
    </ligand>
</feature>
<feature type="binding site" evidence="1">
    <location>
        <position position="116"/>
    </location>
    <ligand>
        <name>iron-sulfur cluster</name>
        <dbReference type="ChEBI" id="CHEBI:30408"/>
    </ligand>
</feature>
<organism>
    <name type="scientific">Bordetella petrii (strain ATCC BAA-461 / DSM 12804 / CCUG 43448)</name>
    <dbReference type="NCBI Taxonomy" id="340100"/>
    <lineage>
        <taxon>Bacteria</taxon>
        <taxon>Pseudomonadati</taxon>
        <taxon>Pseudomonadota</taxon>
        <taxon>Betaproteobacteria</taxon>
        <taxon>Burkholderiales</taxon>
        <taxon>Alcaligenaceae</taxon>
        <taxon>Bordetella</taxon>
    </lineage>
</organism>
<accession>A9I246</accession>
<protein>
    <recommendedName>
        <fullName evidence="1">Putative iron-sulfur cluster insertion protein ErpA</fullName>
    </recommendedName>
</protein>
<sequence>MNAVTETVDLQAPPSPLIFTDSAAAKVKDLLAEEGNPELKLRVFVQGGGCSGFQYGFTFDEAVNEDDTVLDKNGVQLLVDPMSFQYLVGAEIDYKEDLEGAQFVIRNPNASTTCGCGSSFSV</sequence>
<evidence type="ECO:0000255" key="1">
    <source>
        <dbReference type="HAMAP-Rule" id="MF_01380"/>
    </source>
</evidence>
<gene>
    <name evidence="1" type="primary">erpA</name>
    <name type="ordered locus">Bpet0597</name>
</gene>
<name>ERPA_BORPD</name>
<comment type="function">
    <text evidence="1">Required for insertion of 4Fe-4S clusters.</text>
</comment>
<comment type="cofactor">
    <cofactor evidence="1">
        <name>iron-sulfur cluster</name>
        <dbReference type="ChEBI" id="CHEBI:30408"/>
    </cofactor>
    <text evidence="1">Binds 1 iron-sulfur cluster per subunit.</text>
</comment>
<comment type="subunit">
    <text evidence="1">Homodimer.</text>
</comment>
<comment type="similarity">
    <text evidence="1">Belongs to the HesB/IscA family.</text>
</comment>